<name>SYA_KORCO</name>
<dbReference type="EC" id="6.1.1.7" evidence="1"/>
<dbReference type="EMBL" id="CP000968">
    <property type="protein sequence ID" value="ACB08291.1"/>
    <property type="molecule type" value="Genomic_DNA"/>
</dbReference>
<dbReference type="RefSeq" id="WP_012310188.1">
    <property type="nucleotide sequence ID" value="NC_010482.1"/>
</dbReference>
<dbReference type="SMR" id="B1L762"/>
<dbReference type="FunCoup" id="B1L762">
    <property type="interactions" value="158"/>
</dbReference>
<dbReference type="STRING" id="374847.Kcr_1545"/>
<dbReference type="EnsemblBacteria" id="ACB08291">
    <property type="protein sequence ID" value="ACB08291"/>
    <property type="gene ID" value="Kcr_1545"/>
</dbReference>
<dbReference type="GeneID" id="6094822"/>
<dbReference type="KEGG" id="kcr:Kcr_1545"/>
<dbReference type="eggNOG" id="arCOG01255">
    <property type="taxonomic scope" value="Archaea"/>
</dbReference>
<dbReference type="HOGENOM" id="CLU_004485_4_0_2"/>
<dbReference type="InParanoid" id="B1L762"/>
<dbReference type="OrthoDB" id="7506at2157"/>
<dbReference type="PhylomeDB" id="B1L762"/>
<dbReference type="Proteomes" id="UP000001686">
    <property type="component" value="Chromosome"/>
</dbReference>
<dbReference type="GO" id="GO:0005737">
    <property type="term" value="C:cytoplasm"/>
    <property type="evidence" value="ECO:0007669"/>
    <property type="project" value="UniProtKB-SubCell"/>
</dbReference>
<dbReference type="GO" id="GO:0004813">
    <property type="term" value="F:alanine-tRNA ligase activity"/>
    <property type="evidence" value="ECO:0000318"/>
    <property type="project" value="GO_Central"/>
</dbReference>
<dbReference type="GO" id="GO:0002161">
    <property type="term" value="F:aminoacyl-tRNA deacylase activity"/>
    <property type="evidence" value="ECO:0000318"/>
    <property type="project" value="GO_Central"/>
</dbReference>
<dbReference type="GO" id="GO:0005524">
    <property type="term" value="F:ATP binding"/>
    <property type="evidence" value="ECO:0007669"/>
    <property type="project" value="UniProtKB-UniRule"/>
</dbReference>
<dbReference type="GO" id="GO:0000049">
    <property type="term" value="F:tRNA binding"/>
    <property type="evidence" value="ECO:0007669"/>
    <property type="project" value="UniProtKB-KW"/>
</dbReference>
<dbReference type="GO" id="GO:0008270">
    <property type="term" value="F:zinc ion binding"/>
    <property type="evidence" value="ECO:0007669"/>
    <property type="project" value="UniProtKB-UniRule"/>
</dbReference>
<dbReference type="GO" id="GO:0006419">
    <property type="term" value="P:alanyl-tRNA aminoacylation"/>
    <property type="evidence" value="ECO:0000318"/>
    <property type="project" value="GO_Central"/>
</dbReference>
<dbReference type="FunFam" id="2.40.30.130:FF:000010">
    <property type="entry name" value="Alanine--tRNA ligase"/>
    <property type="match status" value="1"/>
</dbReference>
<dbReference type="FunFam" id="3.30.930.10:FF:000056">
    <property type="entry name" value="Alanine--tRNA ligase"/>
    <property type="match status" value="1"/>
</dbReference>
<dbReference type="FunFam" id="3.30.980.10:FF:000004">
    <property type="entry name" value="Alanine--tRNA ligase, cytoplasmic"/>
    <property type="match status" value="1"/>
</dbReference>
<dbReference type="Gene3D" id="2.40.30.130">
    <property type="match status" value="1"/>
</dbReference>
<dbReference type="Gene3D" id="3.10.310.40">
    <property type="match status" value="1"/>
</dbReference>
<dbReference type="Gene3D" id="3.30.54.20">
    <property type="match status" value="1"/>
</dbReference>
<dbReference type="Gene3D" id="3.30.930.10">
    <property type="entry name" value="Bira Bifunctional Protein, Domain 2"/>
    <property type="match status" value="1"/>
</dbReference>
<dbReference type="Gene3D" id="3.30.980.10">
    <property type="entry name" value="Threonyl-trna Synthetase, Chain A, domain 2"/>
    <property type="match status" value="1"/>
</dbReference>
<dbReference type="HAMAP" id="MF_00036_A">
    <property type="entry name" value="Ala_tRNA_synth_A"/>
    <property type="match status" value="1"/>
</dbReference>
<dbReference type="InterPro" id="IPR045864">
    <property type="entry name" value="aa-tRNA-synth_II/BPL/LPL"/>
</dbReference>
<dbReference type="InterPro" id="IPR002318">
    <property type="entry name" value="Ala-tRNA-lgiase_IIc"/>
</dbReference>
<dbReference type="InterPro" id="IPR018162">
    <property type="entry name" value="Ala-tRNA-ligase_IIc_anticod-bd"/>
</dbReference>
<dbReference type="InterPro" id="IPR018165">
    <property type="entry name" value="Ala-tRNA-synth_IIc_core"/>
</dbReference>
<dbReference type="InterPro" id="IPR018164">
    <property type="entry name" value="Ala-tRNA-synth_IIc_N"/>
</dbReference>
<dbReference type="InterPro" id="IPR022429">
    <property type="entry name" value="Ala-tRNA_lgiase_arc"/>
</dbReference>
<dbReference type="InterPro" id="IPR050058">
    <property type="entry name" value="Ala-tRNA_ligase"/>
</dbReference>
<dbReference type="InterPro" id="IPR018163">
    <property type="entry name" value="Thr/Ala-tRNA-synth_IIc_edit"/>
</dbReference>
<dbReference type="InterPro" id="IPR009000">
    <property type="entry name" value="Transl_B-barrel_sf"/>
</dbReference>
<dbReference type="InterPro" id="IPR012947">
    <property type="entry name" value="tRNA_SAD"/>
</dbReference>
<dbReference type="NCBIfam" id="TIGR03683">
    <property type="entry name" value="A-tRNA_syn_arch"/>
    <property type="match status" value="1"/>
</dbReference>
<dbReference type="NCBIfam" id="TIGR00344">
    <property type="entry name" value="alaS"/>
    <property type="match status" value="1"/>
</dbReference>
<dbReference type="PANTHER" id="PTHR11777:SF9">
    <property type="entry name" value="ALANINE--TRNA LIGASE, CYTOPLASMIC"/>
    <property type="match status" value="1"/>
</dbReference>
<dbReference type="PANTHER" id="PTHR11777">
    <property type="entry name" value="ALANYL-TRNA SYNTHETASE"/>
    <property type="match status" value="1"/>
</dbReference>
<dbReference type="Pfam" id="PF01411">
    <property type="entry name" value="tRNA-synt_2c"/>
    <property type="match status" value="1"/>
</dbReference>
<dbReference type="Pfam" id="PF07973">
    <property type="entry name" value="tRNA_SAD"/>
    <property type="match status" value="1"/>
</dbReference>
<dbReference type="PRINTS" id="PR00980">
    <property type="entry name" value="TRNASYNTHALA"/>
</dbReference>
<dbReference type="SMART" id="SM00863">
    <property type="entry name" value="tRNA_SAD"/>
    <property type="match status" value="1"/>
</dbReference>
<dbReference type="SUPFAM" id="SSF55681">
    <property type="entry name" value="Class II aaRS and biotin synthetases"/>
    <property type="match status" value="1"/>
</dbReference>
<dbReference type="SUPFAM" id="SSF101353">
    <property type="entry name" value="Putative anticodon-binding domain of alanyl-tRNA synthetase (AlaRS)"/>
    <property type="match status" value="1"/>
</dbReference>
<dbReference type="SUPFAM" id="SSF55186">
    <property type="entry name" value="ThrRS/AlaRS common domain"/>
    <property type="match status" value="1"/>
</dbReference>
<dbReference type="SUPFAM" id="SSF50447">
    <property type="entry name" value="Translation proteins"/>
    <property type="match status" value="1"/>
</dbReference>
<dbReference type="PROSITE" id="PS50860">
    <property type="entry name" value="AA_TRNA_LIGASE_II_ALA"/>
    <property type="match status" value="1"/>
</dbReference>
<sequence length="895" mass="101833">MQGIEVEFLRSRGYVRKRCPKCGEYFWTLKDRETCGEAPCEPYTFIGRGRQNKSLEEVREDFLRFFERRGHTRINRYPVIARWREDLFLTSASIVDFQPFITAGIVPPPANPLTISQPCIRLKDIDKVGPTMGRHLSIFEMMAHHAFNTKDKFVYWIDRTVELFHEYATSVLGIPEEEITYKEGIWEGGGNAGPDLEPIAGGLEIATLVFMQYRIENGSYVPMDTRVVDTGYGLERITWFLRGDPTGFHAVYGALLHEFMDKLGVSEPDLSLLSEYSKVSSILRELEKGRSISSLRREAALLIGVSEEELEEKIAPLEAVFSLLDHTKALSFMIADGLVPSNVNEGYLGRLLIRRSLRILNQLGSEVPLSELAVRQAEYWSSKGFPELREAIDRIAEIVSIEEERYKEAVERGAKIISDLMREKGRLSVDDLIMLYDSHGLSPDIVRRIAGDVDVPDNFFEMIAARHEARKPEPPKVFERMDELRRYPPTKLLYYQDPYLLEFEARVLGYVDGKMILDRTAFYPEGGGQPSDIGSFEWRGIEVKVVGAEKHGGWILHSVEGDLPPAGEVVRARVDSWRRLNRMRHHTATHVILEAARRVLGSHVWQWGAQKGDEESRLDITHYKGISQEELRRIEMLANEVVMRNIPVRTLWLVRTDAERRYGFTLYQGGVVPDPVLRVVEIEGFNAQACGGTHVLRTGEIGPIKIWRARKIQDGVIRLEFSAGVPAVKRIIDYHQKIKDIAQSAGISEEEIDTFFRGMMEELKELRKERRRMMKEAEERSIERALEAYESTGRHKLSIVRLESIGIDEGIKLADKLSSDRRIVLLTKESGDRVELALLATNYGEGEVDAGSLLRELSREMGGGGGGNWKLGKGSVPKDRLDEFMGVLRKRLEGI</sequence>
<feature type="chain" id="PRO_0000347882" description="Alanine--tRNA ligase">
    <location>
        <begin position="1"/>
        <end position="895"/>
    </location>
</feature>
<feature type="binding site" evidence="1">
    <location>
        <position position="586"/>
    </location>
    <ligand>
        <name>Zn(2+)</name>
        <dbReference type="ChEBI" id="CHEBI:29105"/>
    </ligand>
</feature>
<feature type="binding site" evidence="1">
    <location>
        <position position="590"/>
    </location>
    <ligand>
        <name>Zn(2+)</name>
        <dbReference type="ChEBI" id="CHEBI:29105"/>
    </ligand>
</feature>
<feature type="binding site" evidence="1">
    <location>
        <position position="690"/>
    </location>
    <ligand>
        <name>Zn(2+)</name>
        <dbReference type="ChEBI" id="CHEBI:29105"/>
    </ligand>
</feature>
<feature type="binding site" evidence="1">
    <location>
        <position position="694"/>
    </location>
    <ligand>
        <name>Zn(2+)</name>
        <dbReference type="ChEBI" id="CHEBI:29105"/>
    </ligand>
</feature>
<keyword id="KW-0030">Aminoacyl-tRNA synthetase</keyword>
<keyword id="KW-0067">ATP-binding</keyword>
<keyword id="KW-0963">Cytoplasm</keyword>
<keyword id="KW-0436">Ligase</keyword>
<keyword id="KW-0479">Metal-binding</keyword>
<keyword id="KW-0547">Nucleotide-binding</keyword>
<keyword id="KW-0648">Protein biosynthesis</keyword>
<keyword id="KW-1185">Reference proteome</keyword>
<keyword id="KW-0694">RNA-binding</keyword>
<keyword id="KW-0820">tRNA-binding</keyword>
<keyword id="KW-0862">Zinc</keyword>
<evidence type="ECO:0000255" key="1">
    <source>
        <dbReference type="HAMAP-Rule" id="MF_00036"/>
    </source>
</evidence>
<accession>B1L762</accession>
<protein>
    <recommendedName>
        <fullName evidence="1">Alanine--tRNA ligase</fullName>
        <ecNumber evidence="1">6.1.1.7</ecNumber>
    </recommendedName>
    <alternativeName>
        <fullName evidence="1">Alanyl-tRNA synthetase</fullName>
        <shortName evidence="1">AlaRS</shortName>
    </alternativeName>
</protein>
<comment type="function">
    <text evidence="1">Catalyzes the attachment of alanine to tRNA(Ala) in a two-step reaction: alanine is first activated by ATP to form Ala-AMP and then transferred to the acceptor end of tRNA(Ala). Also edits incorrectly charged Ser-tRNA(Ala) and Gly-tRNA(Ala) via its editing domain.</text>
</comment>
<comment type="catalytic activity">
    <reaction evidence="1">
        <text>tRNA(Ala) + L-alanine + ATP = L-alanyl-tRNA(Ala) + AMP + diphosphate</text>
        <dbReference type="Rhea" id="RHEA:12540"/>
        <dbReference type="Rhea" id="RHEA-COMP:9657"/>
        <dbReference type="Rhea" id="RHEA-COMP:9923"/>
        <dbReference type="ChEBI" id="CHEBI:30616"/>
        <dbReference type="ChEBI" id="CHEBI:33019"/>
        <dbReference type="ChEBI" id="CHEBI:57972"/>
        <dbReference type="ChEBI" id="CHEBI:78442"/>
        <dbReference type="ChEBI" id="CHEBI:78497"/>
        <dbReference type="ChEBI" id="CHEBI:456215"/>
        <dbReference type="EC" id="6.1.1.7"/>
    </reaction>
</comment>
<comment type="cofactor">
    <cofactor evidence="1">
        <name>Zn(2+)</name>
        <dbReference type="ChEBI" id="CHEBI:29105"/>
    </cofactor>
    <text evidence="1">Binds 1 zinc ion per subunit.</text>
</comment>
<comment type="subcellular location">
    <subcellularLocation>
        <location evidence="1">Cytoplasm</location>
    </subcellularLocation>
</comment>
<comment type="domain">
    <text evidence="1">Consists of three domains; the N-terminal catalytic domain, the editing domain and the C-terminal C-Ala domain. The editing domain removes incorrectly charged amino acids, while the C-Ala domain, along with tRNA(Ala), serves as a bridge to cooperatively bring together the editing and aminoacylation centers thus stimulating deacylation of misacylated tRNAs.</text>
</comment>
<comment type="similarity">
    <text evidence="1">Belongs to the class-II aminoacyl-tRNA synthetase family.</text>
</comment>
<gene>
    <name evidence="1" type="primary">alaS</name>
    <name type="ordered locus">Kcr_1545</name>
</gene>
<proteinExistence type="inferred from homology"/>
<organism>
    <name type="scientific">Korarchaeum cryptofilum (strain OPF8)</name>
    <dbReference type="NCBI Taxonomy" id="374847"/>
    <lineage>
        <taxon>Archaea</taxon>
        <taxon>Thermoproteota</taxon>
        <taxon>Candidatus Korarchaeia</taxon>
        <taxon>Candidatus Korarchaeales</taxon>
        <taxon>Candidatus Korarchaeaceae</taxon>
        <taxon>Candidatus Korarchaeum</taxon>
    </lineage>
</organism>
<reference key="1">
    <citation type="journal article" date="2008" name="Proc. Natl. Acad. Sci. U.S.A.">
        <title>A korarchaeal genome reveals new insights into the evolution of the Archaea.</title>
        <authorList>
            <person name="Elkins J.G."/>
            <person name="Podar M."/>
            <person name="Graham D.E."/>
            <person name="Makarova K.S."/>
            <person name="Wolf Y."/>
            <person name="Randau L."/>
            <person name="Hedlund B.P."/>
            <person name="Brochier-Armanet C."/>
            <person name="Kunin V."/>
            <person name="Anderson I."/>
            <person name="Lapidus A."/>
            <person name="Goltsman E."/>
            <person name="Barry K."/>
            <person name="Koonin E.V."/>
            <person name="Hugenholtz P."/>
            <person name="Kyrpides N."/>
            <person name="Wanner G."/>
            <person name="Richardson P."/>
            <person name="Keller M."/>
            <person name="Stetter K.O."/>
        </authorList>
    </citation>
    <scope>NUCLEOTIDE SEQUENCE [LARGE SCALE GENOMIC DNA]</scope>
    <source>
        <strain>OPF8</strain>
    </source>
</reference>